<reference key="1">
    <citation type="submission" date="2006-08" db="EMBL/GenBank/DDBJ databases">
        <title>Complete sequence of Shewanella frigidimarina NCIMB 400.</title>
        <authorList>
            <consortium name="US DOE Joint Genome Institute"/>
            <person name="Copeland A."/>
            <person name="Lucas S."/>
            <person name="Lapidus A."/>
            <person name="Barry K."/>
            <person name="Detter J.C."/>
            <person name="Glavina del Rio T."/>
            <person name="Hammon N."/>
            <person name="Israni S."/>
            <person name="Dalin E."/>
            <person name="Tice H."/>
            <person name="Pitluck S."/>
            <person name="Fredrickson J.K."/>
            <person name="Kolker E."/>
            <person name="McCuel L.A."/>
            <person name="DiChristina T."/>
            <person name="Nealson K.H."/>
            <person name="Newman D."/>
            <person name="Tiedje J.M."/>
            <person name="Zhou J."/>
            <person name="Romine M.F."/>
            <person name="Culley D.E."/>
            <person name="Serres M."/>
            <person name="Chertkov O."/>
            <person name="Brettin T."/>
            <person name="Bruce D."/>
            <person name="Han C."/>
            <person name="Tapia R."/>
            <person name="Gilna P."/>
            <person name="Schmutz J."/>
            <person name="Larimer F."/>
            <person name="Land M."/>
            <person name="Hauser L."/>
            <person name="Kyrpides N."/>
            <person name="Mikhailova N."/>
            <person name="Richardson P."/>
        </authorList>
    </citation>
    <scope>NUCLEOTIDE SEQUENCE [LARGE SCALE GENOMIC DNA]</scope>
    <source>
        <strain>NCIMB 400</strain>
    </source>
</reference>
<sequence length="148" mass="16925">MMTQFWITTPLEKMTPEQWESLCDGCGKCCLNKIIDDETDELYYTNAACHLLDNDTCGCRRYPNRFTYVPECTSITPENIAELTWLPDSCAYRRLHVGKGLPSWHPLLTGNKEAMHAAGISVQGKTVNEMKVKYLEDCIVLWPMLDVE</sequence>
<dbReference type="EMBL" id="CP000447">
    <property type="protein sequence ID" value="ABI71590.1"/>
    <property type="molecule type" value="Genomic_DNA"/>
</dbReference>
<dbReference type="RefSeq" id="WP_011637206.1">
    <property type="nucleotide sequence ID" value="NC_008345.1"/>
</dbReference>
<dbReference type="SMR" id="Q083H5"/>
<dbReference type="STRING" id="318167.Sfri_1740"/>
<dbReference type="DNASU" id="4277519"/>
<dbReference type="KEGG" id="sfr:Sfri_1740"/>
<dbReference type="eggNOG" id="COG2983">
    <property type="taxonomic scope" value="Bacteria"/>
</dbReference>
<dbReference type="HOGENOM" id="CLU_109769_1_0_6"/>
<dbReference type="OrthoDB" id="9786855at2"/>
<dbReference type="Proteomes" id="UP000000684">
    <property type="component" value="Chromosome"/>
</dbReference>
<dbReference type="HAMAP" id="MF_00676">
    <property type="entry name" value="UPF0260"/>
    <property type="match status" value="1"/>
</dbReference>
<dbReference type="InterPro" id="IPR005358">
    <property type="entry name" value="Puta_zinc/iron-chelating_dom"/>
</dbReference>
<dbReference type="InterPro" id="IPR008228">
    <property type="entry name" value="UCP006173"/>
</dbReference>
<dbReference type="NCBIfam" id="NF003500">
    <property type="entry name" value="PRK05170.1-4"/>
    <property type="match status" value="1"/>
</dbReference>
<dbReference type="NCBIfam" id="NF003501">
    <property type="entry name" value="PRK05170.1-5"/>
    <property type="match status" value="1"/>
</dbReference>
<dbReference type="NCBIfam" id="NF003507">
    <property type="entry name" value="PRK05170.2-5"/>
    <property type="match status" value="1"/>
</dbReference>
<dbReference type="PANTHER" id="PTHR37421">
    <property type="entry name" value="UPF0260 PROTEIN YCGN"/>
    <property type="match status" value="1"/>
</dbReference>
<dbReference type="PANTHER" id="PTHR37421:SF1">
    <property type="entry name" value="UPF0260 PROTEIN YCGN"/>
    <property type="match status" value="1"/>
</dbReference>
<dbReference type="Pfam" id="PF03692">
    <property type="entry name" value="CxxCxxCC"/>
    <property type="match status" value="1"/>
</dbReference>
<dbReference type="PIRSF" id="PIRSF006173">
    <property type="entry name" value="UCP006173"/>
    <property type="match status" value="1"/>
</dbReference>
<evidence type="ECO:0000255" key="1">
    <source>
        <dbReference type="HAMAP-Rule" id="MF_00676"/>
    </source>
</evidence>
<organism>
    <name type="scientific">Shewanella frigidimarina (strain NCIMB 400)</name>
    <dbReference type="NCBI Taxonomy" id="318167"/>
    <lineage>
        <taxon>Bacteria</taxon>
        <taxon>Pseudomonadati</taxon>
        <taxon>Pseudomonadota</taxon>
        <taxon>Gammaproteobacteria</taxon>
        <taxon>Alteromonadales</taxon>
        <taxon>Shewanellaceae</taxon>
        <taxon>Shewanella</taxon>
    </lineage>
</organism>
<gene>
    <name type="ordered locus">Sfri_1740</name>
</gene>
<name>Y1740_SHEFN</name>
<comment type="similarity">
    <text evidence="1">Belongs to the UPF0260 family.</text>
</comment>
<proteinExistence type="inferred from homology"/>
<feature type="chain" id="PRO_1000131638" description="UPF0260 protein Sfri_1740">
    <location>
        <begin position="1"/>
        <end position="148"/>
    </location>
</feature>
<protein>
    <recommendedName>
        <fullName evidence="1">UPF0260 protein Sfri_1740</fullName>
    </recommendedName>
</protein>
<keyword id="KW-1185">Reference proteome</keyword>
<accession>Q083H5</accession>